<reference key="1">
    <citation type="journal article" date="2007" name="PLoS Genet.">
        <title>Patterns and implications of gene gain and loss in the evolution of Prochlorococcus.</title>
        <authorList>
            <person name="Kettler G.C."/>
            <person name="Martiny A.C."/>
            <person name="Huang K."/>
            <person name="Zucker J."/>
            <person name="Coleman M.L."/>
            <person name="Rodrigue S."/>
            <person name="Chen F."/>
            <person name="Lapidus A."/>
            <person name="Ferriera S."/>
            <person name="Johnson J."/>
            <person name="Steglich C."/>
            <person name="Church G.M."/>
            <person name="Richardson P."/>
            <person name="Chisholm S.W."/>
        </authorList>
    </citation>
    <scope>NUCLEOTIDE SEQUENCE [LARGE SCALE GENOMIC DNA]</scope>
    <source>
        <strain>MIT 9301</strain>
    </source>
</reference>
<accession>A3PB21</accession>
<gene>
    <name evidence="1" type="primary">psbL</name>
    <name type="ordered locus">P9301_03231</name>
</gene>
<protein>
    <recommendedName>
        <fullName evidence="1">Photosystem II reaction center protein L</fullName>
        <shortName evidence="1">PSII-L</shortName>
    </recommendedName>
</protein>
<keyword id="KW-0472">Membrane</keyword>
<keyword id="KW-0602">Photosynthesis</keyword>
<keyword id="KW-0604">Photosystem II</keyword>
<keyword id="KW-0674">Reaction center</keyword>
<keyword id="KW-1185">Reference proteome</keyword>
<keyword id="KW-0793">Thylakoid</keyword>
<keyword id="KW-0812">Transmembrane</keyword>
<keyword id="KW-1133">Transmembrane helix</keyword>
<feature type="chain" id="PRO_0000306204" description="Photosystem II reaction center protein L">
    <location>
        <begin position="1"/>
        <end position="39"/>
    </location>
</feature>
<feature type="transmembrane region" description="Helical" evidence="1">
    <location>
        <begin position="18"/>
        <end position="38"/>
    </location>
</feature>
<name>PSBL_PROM0</name>
<evidence type="ECO:0000255" key="1">
    <source>
        <dbReference type="HAMAP-Rule" id="MF_01317"/>
    </source>
</evidence>
<evidence type="ECO:0000305" key="2"/>
<comment type="function">
    <text evidence="1">One of the components of the core complex of photosystem II (PSII). PSII is a light-driven water:plastoquinone oxidoreductase that uses light energy to abstract electrons from H(2)O, generating O(2) and a proton gradient subsequently used for ATP formation. It consists of a core antenna complex that captures photons, and an electron transfer chain that converts photonic excitation into a charge separation. This subunit is found at the monomer-monomer interface and is required for correct PSII assembly and/or dimerization.</text>
</comment>
<comment type="subunit">
    <text evidence="2">PSII is composed of 1 copy each of membrane proteins PsbA, PsbB, PsbC, PsbD, PsbE, PsbF, PsbH, PsbI, PsbJ, PsbK, PsbL, PsbM, PsbT, PsbX, PsbY, Psb30/Ycf12, peripheral proteins PsbO, CyanoQ (PsbQ), PsbU, PsbV and a large number of cofactors. It forms dimeric complexes.</text>
</comment>
<comment type="subcellular location">
    <subcellularLocation>
        <location evidence="1">Cellular thylakoid membrane</location>
        <topology evidence="1">Single-pass membrane protein</topology>
    </subcellularLocation>
</comment>
<comment type="similarity">
    <text evidence="1">Belongs to the PsbL family.</text>
</comment>
<sequence>MQVNENPNKVPVELNRTSLYLGLLSVFVLGILFSSYFFN</sequence>
<dbReference type="EMBL" id="CP000576">
    <property type="protein sequence ID" value="ABO16946.1"/>
    <property type="molecule type" value="Genomic_DNA"/>
</dbReference>
<dbReference type="RefSeq" id="WP_002806119.1">
    <property type="nucleotide sequence ID" value="NC_009091.1"/>
</dbReference>
<dbReference type="SMR" id="A3PB21"/>
<dbReference type="STRING" id="167546.P9301_03231"/>
<dbReference type="KEGG" id="pmg:P9301_03231"/>
<dbReference type="HOGENOM" id="CLU_214425_0_0_3"/>
<dbReference type="OrthoDB" id="560356at2"/>
<dbReference type="Proteomes" id="UP000001430">
    <property type="component" value="Chromosome"/>
</dbReference>
<dbReference type="GO" id="GO:0009539">
    <property type="term" value="C:photosystem II reaction center"/>
    <property type="evidence" value="ECO:0007669"/>
    <property type="project" value="InterPro"/>
</dbReference>
<dbReference type="GO" id="GO:0031676">
    <property type="term" value="C:plasma membrane-derived thylakoid membrane"/>
    <property type="evidence" value="ECO:0007669"/>
    <property type="project" value="UniProtKB-SubCell"/>
</dbReference>
<dbReference type="GO" id="GO:0015979">
    <property type="term" value="P:photosynthesis"/>
    <property type="evidence" value="ECO:0007669"/>
    <property type="project" value="UniProtKB-UniRule"/>
</dbReference>
<dbReference type="HAMAP" id="MF_01317">
    <property type="entry name" value="PSII_PsbL"/>
    <property type="match status" value="1"/>
</dbReference>
<dbReference type="InterPro" id="IPR003372">
    <property type="entry name" value="PSII_PsbL"/>
</dbReference>
<dbReference type="InterPro" id="IPR037266">
    <property type="entry name" value="PSII_PsbL_sf"/>
</dbReference>
<dbReference type="NCBIfam" id="NF001972">
    <property type="entry name" value="PRK00753.1"/>
    <property type="match status" value="1"/>
</dbReference>
<dbReference type="Pfam" id="PF02419">
    <property type="entry name" value="PsbL"/>
    <property type="match status" value="1"/>
</dbReference>
<dbReference type="SUPFAM" id="SSF161017">
    <property type="entry name" value="Photosystem II reaction center protein L, PsbL"/>
    <property type="match status" value="1"/>
</dbReference>
<organism>
    <name type="scientific">Prochlorococcus marinus (strain MIT 9301)</name>
    <dbReference type="NCBI Taxonomy" id="167546"/>
    <lineage>
        <taxon>Bacteria</taxon>
        <taxon>Bacillati</taxon>
        <taxon>Cyanobacteriota</taxon>
        <taxon>Cyanophyceae</taxon>
        <taxon>Synechococcales</taxon>
        <taxon>Prochlorococcaceae</taxon>
        <taxon>Prochlorococcus</taxon>
    </lineage>
</organism>
<proteinExistence type="inferred from homology"/>